<gene>
    <name evidence="8" type="primary">Slc22a27</name>
    <name evidence="4" type="synonym">Oat9</name>
</gene>
<name>S22AR_MOUSE</name>
<dbReference type="EMBL" id="AB056442">
    <property type="protein sequence ID" value="BAB85630.1"/>
    <property type="molecule type" value="mRNA"/>
</dbReference>
<dbReference type="EMBL" id="AB056443">
    <property type="protein sequence ID" value="BAB85631.1"/>
    <property type="molecule type" value="mRNA"/>
</dbReference>
<dbReference type="EMBL" id="AC115715">
    <property type="status" value="NOT_ANNOTATED_CDS"/>
    <property type="molecule type" value="Genomic_DNA"/>
</dbReference>
<dbReference type="EMBL" id="AC122119">
    <property type="status" value="NOT_ANNOTATED_CDS"/>
    <property type="molecule type" value="Genomic_DNA"/>
</dbReference>
<dbReference type="CCDS" id="CCDS50380.1">
    <molecule id="Q76M72-1"/>
</dbReference>
<dbReference type="CCDS" id="CCDS89333.1">
    <molecule id="Q76M72-2"/>
</dbReference>
<dbReference type="RefSeq" id="NP_001348909.1">
    <molecule id="Q76M72-2"/>
    <property type="nucleotide sequence ID" value="NM_001361980.1"/>
</dbReference>
<dbReference type="RefSeq" id="NP_599017.1">
    <molecule id="Q76M72-1"/>
    <property type="nucleotide sequence ID" value="NM_134256.1"/>
</dbReference>
<dbReference type="RefSeq" id="XP_006526791.1">
    <molecule id="Q76M72-1"/>
    <property type="nucleotide sequence ID" value="XM_006526728.3"/>
</dbReference>
<dbReference type="SMR" id="Q76M72"/>
<dbReference type="FunCoup" id="Q76M72">
    <property type="interactions" value="14"/>
</dbReference>
<dbReference type="STRING" id="10090.ENSMUSP00000093991"/>
<dbReference type="TCDB" id="2.A.1.19.40">
    <property type="family name" value="the major facilitator superfamily (mfs)"/>
</dbReference>
<dbReference type="GlyCosmos" id="Q76M72">
    <property type="glycosylation" value="5 sites, No reported glycans"/>
</dbReference>
<dbReference type="GlyGen" id="Q76M72">
    <property type="glycosylation" value="5 sites"/>
</dbReference>
<dbReference type="iPTMnet" id="Q76M72"/>
<dbReference type="PhosphoSitePlus" id="Q76M72"/>
<dbReference type="SwissPalm" id="Q76M72"/>
<dbReference type="jPOST" id="Q76M72"/>
<dbReference type="PaxDb" id="10090-ENSMUSP00000093991"/>
<dbReference type="ProteomicsDB" id="260890">
    <molecule id="Q76M72-1"/>
</dbReference>
<dbReference type="ProteomicsDB" id="260891">
    <molecule id="Q76M72-2"/>
</dbReference>
<dbReference type="DNASU" id="171405"/>
<dbReference type="Ensembl" id="ENSMUST00000075619.5">
    <molecule id="Q76M72-1"/>
    <property type="protein sequence ID" value="ENSMUSP00000093991.2"/>
    <property type="gene ID" value="ENSMUSG00000067656.14"/>
</dbReference>
<dbReference type="Ensembl" id="ENSMUST00000182102.8">
    <molecule id="Q76M72-2"/>
    <property type="protein sequence ID" value="ENSMUSP00000138475.2"/>
    <property type="gene ID" value="ENSMUSG00000067656.14"/>
</dbReference>
<dbReference type="GeneID" id="171405"/>
<dbReference type="KEGG" id="mmu:171405"/>
<dbReference type="UCSC" id="uc008gls.1">
    <molecule id="Q76M72-1"/>
    <property type="organism name" value="mouse"/>
</dbReference>
<dbReference type="UCSC" id="uc012bhz.1">
    <property type="organism name" value="mouse"/>
</dbReference>
<dbReference type="AGR" id="MGI:3042283"/>
<dbReference type="CTD" id="171405"/>
<dbReference type="MGI" id="MGI:3042283">
    <property type="gene designation" value="Slc22a27"/>
</dbReference>
<dbReference type="VEuPathDB" id="HostDB:ENSMUSG00000067656"/>
<dbReference type="eggNOG" id="KOG0255">
    <property type="taxonomic scope" value="Eukaryota"/>
</dbReference>
<dbReference type="GeneTree" id="ENSGT00940000161239"/>
<dbReference type="InParanoid" id="Q76M72"/>
<dbReference type="OMA" id="VEWITHR"/>
<dbReference type="OrthoDB" id="2544694at2759"/>
<dbReference type="PhylomeDB" id="Q76M72"/>
<dbReference type="TreeFam" id="TF315847"/>
<dbReference type="BioGRID-ORCS" id="171405">
    <property type="hits" value="0 hits in 44 CRISPR screens"/>
</dbReference>
<dbReference type="ChiTaRS" id="Slc22a27">
    <property type="organism name" value="mouse"/>
</dbReference>
<dbReference type="PRO" id="PR:Q76M72"/>
<dbReference type="Proteomes" id="UP000000589">
    <property type="component" value="Chromosome 19"/>
</dbReference>
<dbReference type="RNAct" id="Q76M72">
    <property type="molecule type" value="protein"/>
</dbReference>
<dbReference type="Bgee" id="ENSMUSG00000067656">
    <property type="expression patterns" value="Expressed in proximal tubule and 6 other cell types or tissues"/>
</dbReference>
<dbReference type="GO" id="GO:0005886">
    <property type="term" value="C:plasma membrane"/>
    <property type="evidence" value="ECO:0007669"/>
    <property type="project" value="UniProtKB-SubCell"/>
</dbReference>
<dbReference type="GO" id="GO:0022857">
    <property type="term" value="F:transmembrane transporter activity"/>
    <property type="evidence" value="ECO:0007669"/>
    <property type="project" value="InterPro"/>
</dbReference>
<dbReference type="CDD" id="cd17374">
    <property type="entry name" value="MFS_OAT"/>
    <property type="match status" value="1"/>
</dbReference>
<dbReference type="FunFam" id="1.20.1250.20:FF:000023">
    <property type="entry name" value="Solute carrier family 22 member 6"/>
    <property type="match status" value="1"/>
</dbReference>
<dbReference type="Gene3D" id="1.20.1250.20">
    <property type="entry name" value="MFS general substrate transporter like domains"/>
    <property type="match status" value="1"/>
</dbReference>
<dbReference type="InterPro" id="IPR020846">
    <property type="entry name" value="MFS_dom"/>
</dbReference>
<dbReference type="InterPro" id="IPR005828">
    <property type="entry name" value="MFS_sugar_transport-like"/>
</dbReference>
<dbReference type="InterPro" id="IPR036259">
    <property type="entry name" value="MFS_trans_sf"/>
</dbReference>
<dbReference type="PANTHER" id="PTHR24064">
    <property type="entry name" value="SOLUTE CARRIER FAMILY 22 MEMBER"/>
    <property type="match status" value="1"/>
</dbReference>
<dbReference type="Pfam" id="PF00083">
    <property type="entry name" value="Sugar_tr"/>
    <property type="match status" value="1"/>
</dbReference>
<dbReference type="SUPFAM" id="SSF103473">
    <property type="entry name" value="MFS general substrate transporter"/>
    <property type="match status" value="1"/>
</dbReference>
<dbReference type="PROSITE" id="PS50850">
    <property type="entry name" value="MFS"/>
    <property type="match status" value="1"/>
</dbReference>
<protein>
    <recommendedName>
        <fullName evidence="8">Solute carrier family 22 member 27</fullName>
    </recommendedName>
    <alternativeName>
        <fullName evidence="4">Organic anion transporter 9</fullName>
    </alternativeName>
</protein>
<keyword id="KW-0025">Alternative splicing</keyword>
<keyword id="KW-1003">Cell membrane</keyword>
<keyword id="KW-0325">Glycoprotein</keyword>
<keyword id="KW-0472">Membrane</keyword>
<keyword id="KW-1185">Reference proteome</keyword>
<keyword id="KW-0812">Transmembrane</keyword>
<keyword id="KW-1133">Transmembrane helix</keyword>
<keyword id="KW-0813">Transport</keyword>
<proteinExistence type="evidence at protein level"/>
<reference evidence="6" key="1">
    <citation type="journal article" date="2010" name="Cell. Physiol. Biochem.">
        <title>Identification of a novel organic anion transporter mediating carnitine transport in mouse liver and kidney.</title>
        <authorList>
            <person name="Tsuchida H."/>
            <person name="Anzai N."/>
            <person name="Shin H.J."/>
            <person name="Wempe M.F."/>
            <person name="Jutabha P."/>
            <person name="Enomoto A."/>
            <person name="Cha S.H."/>
            <person name="Satoh T."/>
            <person name="Ishida M."/>
            <person name="Sakurai H."/>
            <person name="Endou H."/>
        </authorList>
    </citation>
    <scope>NUCLEOTIDE SEQUENCE [MRNA] (ISOFORMS 1 AND 2)</scope>
    <scope>FUNCTION</scope>
    <scope>BIOPHYSICOCHEMICAL PROPERTIES</scope>
    <scope>SUBCELLULAR LOCATION</scope>
    <scope>TISSUE SPECIFICITY</scope>
    <source>
        <tissue evidence="6 7">Liver</tissue>
    </source>
</reference>
<reference evidence="9" key="2">
    <citation type="journal article" date="2009" name="PLoS Biol.">
        <title>Lineage-specific biology revealed by a finished genome assembly of the mouse.</title>
        <authorList>
            <person name="Church D.M."/>
            <person name="Goodstadt L."/>
            <person name="Hillier L.W."/>
            <person name="Zody M.C."/>
            <person name="Goldstein S."/>
            <person name="She X."/>
            <person name="Bult C.J."/>
            <person name="Agarwala R."/>
            <person name="Cherry J.L."/>
            <person name="DiCuccio M."/>
            <person name="Hlavina W."/>
            <person name="Kapustin Y."/>
            <person name="Meric P."/>
            <person name="Maglott D."/>
            <person name="Birtle Z."/>
            <person name="Marques A.C."/>
            <person name="Graves T."/>
            <person name="Zhou S."/>
            <person name="Teague B."/>
            <person name="Potamousis K."/>
            <person name="Churas C."/>
            <person name="Place M."/>
            <person name="Herschleb J."/>
            <person name="Runnheim R."/>
            <person name="Forrest D."/>
            <person name="Amos-Landgraf J."/>
            <person name="Schwartz D.C."/>
            <person name="Cheng Z."/>
            <person name="Lindblad-Toh K."/>
            <person name="Eichler E.E."/>
            <person name="Ponting C.P."/>
        </authorList>
    </citation>
    <scope>NUCLEOTIDE SEQUENCE [LARGE SCALE GENOMIC DNA]</scope>
    <source>
        <strain>C57BL/6J</strain>
    </source>
</reference>
<accession>Q76M72</accession>
<accession>Q76M71</accession>
<organism>
    <name type="scientific">Mus musculus</name>
    <name type="common">Mouse</name>
    <dbReference type="NCBI Taxonomy" id="10090"/>
    <lineage>
        <taxon>Eukaryota</taxon>
        <taxon>Metazoa</taxon>
        <taxon>Chordata</taxon>
        <taxon>Craniata</taxon>
        <taxon>Vertebrata</taxon>
        <taxon>Euteleostomi</taxon>
        <taxon>Mammalia</taxon>
        <taxon>Eutheria</taxon>
        <taxon>Euarchontoglires</taxon>
        <taxon>Glires</taxon>
        <taxon>Rodentia</taxon>
        <taxon>Myomorpha</taxon>
        <taxon>Muroidea</taxon>
        <taxon>Muridae</taxon>
        <taxon>Murinae</taxon>
        <taxon>Mus</taxon>
        <taxon>Mus</taxon>
    </lineage>
</organism>
<feature type="chain" id="PRO_0000436775" description="Solute carrier family 22 member 27">
    <location>
        <begin position="1"/>
        <end position="551"/>
    </location>
</feature>
<feature type="topological domain" description="Cytoplasmic" evidence="5">
    <location>
        <begin position="1"/>
        <end position="15"/>
    </location>
</feature>
<feature type="transmembrane region" description="Helical" evidence="1">
    <location>
        <begin position="16"/>
        <end position="36"/>
    </location>
</feature>
<feature type="topological domain" description="Extracellular" evidence="5">
    <location>
        <begin position="37"/>
        <end position="145"/>
    </location>
</feature>
<feature type="transmembrane region" description="Helical" evidence="1">
    <location>
        <begin position="146"/>
        <end position="166"/>
    </location>
</feature>
<feature type="topological domain" description="Cytoplasmic" evidence="5">
    <location>
        <begin position="167"/>
        <end position="173"/>
    </location>
</feature>
<feature type="transmembrane region" description="Helical" evidence="1">
    <location>
        <begin position="174"/>
        <end position="194"/>
    </location>
</feature>
<feature type="topological domain" description="Extracellular" evidence="5">
    <location>
        <begin position="195"/>
        <end position="203"/>
    </location>
</feature>
<feature type="transmembrane region" description="Helical" evidence="1">
    <location>
        <begin position="204"/>
        <end position="224"/>
    </location>
</feature>
<feature type="topological domain" description="Cytoplasmic" evidence="5">
    <location>
        <begin position="225"/>
        <end position="234"/>
    </location>
</feature>
<feature type="transmembrane region" description="Helical" evidence="1">
    <location>
        <begin position="235"/>
        <end position="255"/>
    </location>
</feature>
<feature type="topological domain" description="Extracellular" evidence="5">
    <location>
        <begin position="256"/>
        <end position="258"/>
    </location>
</feature>
<feature type="transmembrane region" description="Helical" evidence="1">
    <location>
        <begin position="259"/>
        <end position="279"/>
    </location>
</feature>
<feature type="topological domain" description="Cytoplasmic" evidence="5">
    <location>
        <begin position="280"/>
        <end position="348"/>
    </location>
</feature>
<feature type="transmembrane region" description="Helical" evidence="1">
    <location>
        <begin position="349"/>
        <end position="369"/>
    </location>
</feature>
<feature type="topological domain" description="Extracellular" evidence="5">
    <location>
        <begin position="370"/>
        <end position="376"/>
    </location>
</feature>
<feature type="transmembrane region" description="Helical" evidence="1">
    <location>
        <begin position="377"/>
        <end position="397"/>
    </location>
</feature>
<feature type="topological domain" description="Cytoplasmic" evidence="5">
    <location>
        <begin position="398"/>
        <end position="405"/>
    </location>
</feature>
<feature type="transmembrane region" description="Helical" evidence="1">
    <location>
        <begin position="406"/>
        <end position="426"/>
    </location>
</feature>
<feature type="topological domain" description="Extracellular" evidence="5">
    <location>
        <begin position="427"/>
        <end position="432"/>
    </location>
</feature>
<feature type="transmembrane region" description="Helical" evidence="1">
    <location>
        <begin position="433"/>
        <end position="453"/>
    </location>
</feature>
<feature type="topological domain" description="Cytoplasmic" evidence="5">
    <location>
        <begin position="454"/>
        <end position="467"/>
    </location>
</feature>
<feature type="transmembrane region" description="Helical" evidence="1">
    <location>
        <begin position="468"/>
        <end position="488"/>
    </location>
</feature>
<feature type="topological domain" description="Extracellular" evidence="5">
    <location>
        <begin position="489"/>
        <end position="494"/>
    </location>
</feature>
<feature type="transmembrane region" description="Helical" evidence="1">
    <location>
        <begin position="495"/>
        <end position="515"/>
    </location>
</feature>
<feature type="topological domain" description="Cytoplasmic" evidence="5">
    <location>
        <begin position="516"/>
        <end position="551"/>
    </location>
</feature>
<feature type="region of interest" description="Disordered" evidence="2">
    <location>
        <begin position="523"/>
        <end position="551"/>
    </location>
</feature>
<feature type="compositionally biased region" description="Basic and acidic residues" evidence="2">
    <location>
        <begin position="525"/>
        <end position="545"/>
    </location>
</feature>
<feature type="glycosylation site" description="N-linked (GlcNAc...) asparagine" evidence="1">
    <location>
        <position position="39"/>
    </location>
</feature>
<feature type="glycosylation site" description="N-linked (GlcNAc...) asparagine" evidence="1">
    <location>
        <position position="56"/>
    </location>
</feature>
<feature type="glycosylation site" description="N-linked (GlcNAc...) asparagine" evidence="1">
    <location>
        <position position="62"/>
    </location>
</feature>
<feature type="glycosylation site" description="N-linked (GlcNAc...) asparagine" evidence="1">
    <location>
        <position position="102"/>
    </location>
</feature>
<feature type="glycosylation site" description="N-linked (GlcNAc...) asparagine" evidence="1">
    <location>
        <position position="107"/>
    </location>
</feature>
<feature type="splice variant" id="VSP_058421" description="In isoform 2.">
    <location>
        <begin position="170"/>
        <end position="277"/>
    </location>
</feature>
<sequence length="551" mass="62045">MSFQELLNQVGSLGRFQILQIVFLLLLNAIVVPHIAMENFTAAIPNHRCWVPILDNDTASDNGSRILSQDDLLRISIPLDSNLRPEKCRRFAQPQWHLLHLNGTFSNVSEPDTEPCVDGWVYDRSNFLSTIVTEWDLVCESQALNSVTKFSFMIGLFIGGIICGHLSDRLGRKFILTCALLQFAITETCVAFAPSFFIYCSLRFLAGLSVEPILVNSHLLMLEWTSPKFLTMMAALLSCAPNIGYMISAGLAFLFRIWHHLQLTMSVPIFFFLILTRWLSESARWLIVTNKPQKGLKELRKVAHMNGMKNSGDLTMEIVRTSMKAELEAAKTKPSLRDLFHTSILRKRICVLSFMRLFFTVSIFGLAVHLQHLSSNIILLQFLISALAILVSVIGPFVLNHIGRRITYLVLMSLRGIFILIAVFVPQEMQTLRIIMATLAEGISSLCVGVSRLHTNELLPTTLRATAVGVIGFFGNSGSFLSPLFMLLATYYANMPWIFYGGFSIFNAFTVFLLPETKNQPLPDSTHDVGNDWKESRKGKKEDPIIKVTRF</sequence>
<comment type="function">
    <molecule>Isoform 1</molecule>
    <text evidence="3">Does not appear to have transporter activity.</text>
</comment>
<comment type="function">
    <molecule>Isoform 2</molecule>
    <text evidence="3">Sodium-independent organic anion transporter which exhibits high specificity for L-carnitine. Can also transport salicylic acid and the drug cimetidine.</text>
</comment>
<comment type="biophysicochemical properties">
    <kinetics>
        <KM evidence="3">2.8 uM for L-carnitine (isoform 2)</KM>
        <KM evidence="3">16.1 uM for cimetidine (isoform 2)</KM>
        <KM evidence="3">175.5 uM for salicylic acid (isoform 2)</KM>
    </kinetics>
</comment>
<comment type="subcellular location">
    <subcellularLocation>
        <location evidence="3">Cell membrane</location>
        <topology evidence="1">Multi-pass membrane protein</topology>
    </subcellularLocation>
</comment>
<comment type="alternative products">
    <event type="alternative splicing"/>
    <isoform>
        <id>Q76M72-1</id>
        <name>1</name>
        <name evidence="4">L</name>
        <sequence type="displayed"/>
    </isoform>
    <isoform>
        <id>Q76M72-2</id>
        <name>2</name>
        <name evidence="4">S</name>
        <sequence type="described" ref="VSP_058421"/>
    </isoform>
</comment>
<comment type="tissue specificity">
    <text evidence="3">Expressed in proximal kidney tubules, and in liver hepatocytes (at protein level).</text>
</comment>
<comment type="similarity">
    <text evidence="5">Belongs to the major facilitator (TC 2.A.1) superfamily. Organic cation transporter (TC 2.A.1.19) family.</text>
</comment>
<evidence type="ECO:0000255" key="1"/>
<evidence type="ECO:0000256" key="2">
    <source>
        <dbReference type="SAM" id="MobiDB-lite"/>
    </source>
</evidence>
<evidence type="ECO:0000269" key="3">
    <source>
    </source>
</evidence>
<evidence type="ECO:0000303" key="4">
    <source>
    </source>
</evidence>
<evidence type="ECO:0000305" key="5"/>
<evidence type="ECO:0000312" key="6">
    <source>
        <dbReference type="EMBL" id="BAB85630.1"/>
    </source>
</evidence>
<evidence type="ECO:0000312" key="7">
    <source>
        <dbReference type="EMBL" id="BAB85631.1"/>
    </source>
</evidence>
<evidence type="ECO:0000312" key="8">
    <source>
        <dbReference type="MGI" id="MGI:3042283"/>
    </source>
</evidence>
<evidence type="ECO:0000312" key="9">
    <source>
        <dbReference type="Proteomes" id="UP000000589"/>
    </source>
</evidence>